<name>A1KA5_LOXSA</name>
<evidence type="ECO:0000250" key="1">
    <source>
        <dbReference type="UniProtKB" id="A0A0D4WTV1"/>
    </source>
</evidence>
<evidence type="ECO:0000250" key="2">
    <source>
        <dbReference type="UniProtKB" id="A0A0D4WV12"/>
    </source>
</evidence>
<evidence type="ECO:0000250" key="3">
    <source>
        <dbReference type="UniProtKB" id="P0CE80"/>
    </source>
</evidence>
<evidence type="ECO:0000250" key="4">
    <source>
        <dbReference type="UniProtKB" id="Q4ZFU2"/>
    </source>
</evidence>
<evidence type="ECO:0000250" key="5">
    <source>
        <dbReference type="UniProtKB" id="Q8I914"/>
    </source>
</evidence>
<evidence type="ECO:0000303" key="6">
    <source>
    </source>
</evidence>
<evidence type="ECO:0000305" key="7"/>
<evidence type="ECO:0000305" key="8">
    <source>
    </source>
</evidence>
<dbReference type="EC" id="4.6.1.-" evidence="4"/>
<dbReference type="EMBL" id="FJ171424">
    <property type="protein sequence ID" value="ACN48920.2"/>
    <property type="molecule type" value="mRNA"/>
</dbReference>
<dbReference type="SMR" id="C0JAY9"/>
<dbReference type="GO" id="GO:0005576">
    <property type="term" value="C:extracellular region"/>
    <property type="evidence" value="ECO:0007669"/>
    <property type="project" value="UniProtKB-SubCell"/>
</dbReference>
<dbReference type="GO" id="GO:0016829">
    <property type="term" value="F:lyase activity"/>
    <property type="evidence" value="ECO:0007669"/>
    <property type="project" value="UniProtKB-KW"/>
</dbReference>
<dbReference type="GO" id="GO:0046872">
    <property type="term" value="F:metal ion binding"/>
    <property type="evidence" value="ECO:0007669"/>
    <property type="project" value="UniProtKB-KW"/>
</dbReference>
<dbReference type="GO" id="GO:0008081">
    <property type="term" value="F:phosphoric diester hydrolase activity"/>
    <property type="evidence" value="ECO:0007669"/>
    <property type="project" value="InterPro"/>
</dbReference>
<dbReference type="GO" id="GO:0090729">
    <property type="term" value="F:toxin activity"/>
    <property type="evidence" value="ECO:0007669"/>
    <property type="project" value="UniProtKB-KW"/>
</dbReference>
<dbReference type="GO" id="GO:0031640">
    <property type="term" value="P:killing of cells of another organism"/>
    <property type="evidence" value="ECO:0007669"/>
    <property type="project" value="UniProtKB-KW"/>
</dbReference>
<dbReference type="GO" id="GO:0016042">
    <property type="term" value="P:lipid catabolic process"/>
    <property type="evidence" value="ECO:0007669"/>
    <property type="project" value="UniProtKB-KW"/>
</dbReference>
<dbReference type="CDD" id="cd08576">
    <property type="entry name" value="GDPD_like_SMaseD_PLD"/>
    <property type="match status" value="1"/>
</dbReference>
<dbReference type="Gene3D" id="3.20.20.190">
    <property type="entry name" value="Phosphatidylinositol (PI) phosphodiesterase"/>
    <property type="match status" value="1"/>
</dbReference>
<dbReference type="InterPro" id="IPR017946">
    <property type="entry name" value="PLC-like_Pdiesterase_TIM-brl"/>
</dbReference>
<dbReference type="Pfam" id="PF13653">
    <property type="entry name" value="GDPD_2"/>
    <property type="match status" value="1"/>
</dbReference>
<dbReference type="SUPFAM" id="SSF51695">
    <property type="entry name" value="PLC-like phosphodiesterases"/>
    <property type="match status" value="1"/>
</dbReference>
<protein>
    <recommendedName>
        <fullName evidence="6">Dermonecrotic toxin LsaSicTox-alphaIB1av</fullName>
        <ecNumber evidence="4">4.6.1.-</ecNumber>
    </recommendedName>
    <alternativeName>
        <fullName>Phospholipase D</fullName>
        <shortName>PLD</shortName>
    </alternativeName>
    <alternativeName>
        <fullName>Sphingomyelin phosphodiesterase D</fullName>
        <shortName>SMD</shortName>
        <shortName>SMase D</shortName>
        <shortName>Sphingomyelinase D</shortName>
    </alternativeName>
</protein>
<sequence length="270" mass="30180">GHMVNAIAQIDEFVNLGANSIETDVSFDKNANPEYTYHGIPCDCGRTCTKWEYFNTFLGGLRKATTPGDSKYHEKLVLVVFDLKTGSLYDNQAYDAGTKLAKSLLQNYWNKGNNGGRAYIVLSIPNLDHYKLITGFKETLTKEEHPELMDKVGYDFSGNDDIGDVAKAYKKAGVTGHVWQSDGITNCLLRGLDRVRKAVANRDSSNGYINKVYYWTVDKRASTRDALDAGVDGIMTNYPDVIADVLSESAYTAKFRIATYDDNPWETFKN</sequence>
<feature type="chain" id="PRO_0000392779" description="Dermonecrotic toxin LsaSicTox-alphaIB1av">
    <location>
        <begin position="1" status="less than"/>
        <end position="270"/>
    </location>
</feature>
<feature type="active site" evidence="5">
    <location>
        <position position="2"/>
    </location>
</feature>
<feature type="active site" description="Nucleophile" evidence="5">
    <location>
        <position position="38"/>
    </location>
</feature>
<feature type="binding site" evidence="5">
    <location>
        <position position="22"/>
    </location>
    <ligand>
        <name>Mg(2+)</name>
        <dbReference type="ChEBI" id="CHEBI:18420"/>
    </ligand>
</feature>
<feature type="binding site" evidence="5">
    <location>
        <position position="24"/>
    </location>
    <ligand>
        <name>Mg(2+)</name>
        <dbReference type="ChEBI" id="CHEBI:18420"/>
    </ligand>
</feature>
<feature type="binding site" evidence="5">
    <location>
        <position position="82"/>
    </location>
    <ligand>
        <name>Mg(2+)</name>
        <dbReference type="ChEBI" id="CHEBI:18420"/>
    </ligand>
</feature>
<feature type="disulfide bond" evidence="3">
    <location>
        <begin position="42"/>
        <end position="48"/>
    </location>
</feature>
<feature type="disulfide bond" evidence="3">
    <location>
        <begin position="44"/>
        <end position="187"/>
    </location>
</feature>
<feature type="non-terminal residue">
    <location>
        <position position="1"/>
    </location>
</feature>
<accession>C0JAY9</accession>
<comment type="function">
    <text evidence="1 3">Dermonecrotic toxins cleave the phosphodiester linkage between the phosphate and headgroup of certain phospholipids (sphingolipid and lysolipid substrates), forming an alcohol (often choline) and a cyclic phosphate (By similarity). This toxin acts on sphingomyelin (SM) (By similarity). It may also act on ceramide phosphoethanolamine (CPE), lysophosphatidylcholine (LPC) and lysophosphatidylethanolamine (LPE), but not on lysophosphatidylserine (LPS), and lysophosphatidylglycerol (LPG) (By similarity). It acts by transphosphatidylation, releasing exclusively cyclic phosphate products as second products (By similarity). Induces dermonecrosis, hemolysis, increased vascular permeability, edema, inflammatory response, and platelet aggregation (By similarity).</text>
</comment>
<comment type="catalytic activity">
    <reaction evidence="1">
        <text>an N-(acyl)-sphingosylphosphocholine = an N-(acyl)-sphingosyl-1,3-cyclic phosphate + choline</text>
        <dbReference type="Rhea" id="RHEA:60652"/>
        <dbReference type="ChEBI" id="CHEBI:15354"/>
        <dbReference type="ChEBI" id="CHEBI:64583"/>
        <dbReference type="ChEBI" id="CHEBI:143892"/>
    </reaction>
</comment>
<comment type="catalytic activity">
    <reaction evidence="1">
        <text>an N-(acyl)-sphingosylphosphoethanolamine = an N-(acyl)-sphingosyl-1,3-cyclic phosphate + ethanolamine</text>
        <dbReference type="Rhea" id="RHEA:60648"/>
        <dbReference type="ChEBI" id="CHEBI:57603"/>
        <dbReference type="ChEBI" id="CHEBI:143891"/>
        <dbReference type="ChEBI" id="CHEBI:143892"/>
    </reaction>
</comment>
<comment type="catalytic activity">
    <reaction evidence="1">
        <text>a 1-acyl-sn-glycero-3-phosphocholine = a 1-acyl-sn-glycero-2,3-cyclic phosphate + choline</text>
        <dbReference type="Rhea" id="RHEA:60700"/>
        <dbReference type="ChEBI" id="CHEBI:15354"/>
        <dbReference type="ChEBI" id="CHEBI:58168"/>
        <dbReference type="ChEBI" id="CHEBI:143947"/>
    </reaction>
</comment>
<comment type="catalytic activity">
    <reaction evidence="1">
        <text>a 1-acyl-sn-glycero-3-phosphoethanolamine = a 1-acyl-sn-glycero-2,3-cyclic phosphate + ethanolamine</text>
        <dbReference type="Rhea" id="RHEA:60704"/>
        <dbReference type="ChEBI" id="CHEBI:57603"/>
        <dbReference type="ChEBI" id="CHEBI:64381"/>
        <dbReference type="ChEBI" id="CHEBI:143947"/>
    </reaction>
</comment>
<comment type="cofactor">
    <cofactor evidence="5">
        <name>Mg(2+)</name>
        <dbReference type="ChEBI" id="CHEBI:18420"/>
    </cofactor>
    <text evidence="5">Binds 1 Mg(2+) ion per subunit.</text>
</comment>
<comment type="subcellular location">
    <subcellularLocation>
        <location evidence="8">Secreted</location>
    </subcellularLocation>
</comment>
<comment type="tissue specificity">
    <text evidence="8">Expressed by the venom gland.</text>
</comment>
<comment type="similarity">
    <text evidence="7">Belongs to the arthropod phospholipase D family. Class II subfamily.</text>
</comment>
<comment type="caution">
    <text evidence="1 2 4">The most common activity assay for dermonecrotic toxins detects enzymatic activity by monitoring choline release from substrate. Liberation of choline from sphingomyelin (SM) or lysophosphatidylcholine (LPC) is commonly assumed to result from substrate hydrolysis, giving either ceramide-1-phosphate (C1P) or lysophosphatidic acid (LPA), respectively, as a second product. However, two studies from Lajoie and colleagues (2013 and 2015) report the observation of exclusive formation of cyclic phosphate products as second products, resulting from intramolecular transphosphatidylation. Cyclic phosphates have vastly different biological properties from their monoester counterparts, and they may be relevant to the pathology of brown spider envenomation.</text>
</comment>
<organism>
    <name type="scientific">Loxosceles sabina</name>
    <name type="common">Tucson recluse spider</name>
    <dbReference type="NCBI Taxonomy" id="571529"/>
    <lineage>
        <taxon>Eukaryota</taxon>
        <taxon>Metazoa</taxon>
        <taxon>Ecdysozoa</taxon>
        <taxon>Arthropoda</taxon>
        <taxon>Chelicerata</taxon>
        <taxon>Arachnida</taxon>
        <taxon>Araneae</taxon>
        <taxon>Araneomorphae</taxon>
        <taxon>Haplogynae</taxon>
        <taxon>Scytodoidea</taxon>
        <taxon>Sicariidae</taxon>
        <taxon>Loxosceles</taxon>
    </lineage>
</organism>
<proteinExistence type="evidence at transcript level"/>
<keyword id="KW-0204">Cytolysis</keyword>
<keyword id="KW-1061">Dermonecrotic toxin</keyword>
<keyword id="KW-1015">Disulfide bond</keyword>
<keyword id="KW-0354">Hemolysis</keyword>
<keyword id="KW-0442">Lipid degradation</keyword>
<keyword id="KW-0443">Lipid metabolism</keyword>
<keyword id="KW-0456">Lyase</keyword>
<keyword id="KW-0460">Magnesium</keyword>
<keyword id="KW-0479">Metal-binding</keyword>
<keyword id="KW-0964">Secreted</keyword>
<keyword id="KW-0800">Toxin</keyword>
<reference key="1">
    <citation type="journal article" date="2009" name="Mol. Biol. Evol.">
        <title>Molecular evolution, functional variation, and proposed nomenclature of the gene family that includes sphingomyelinase D in sicariid spider venoms.</title>
        <authorList>
            <person name="Binford G.J."/>
            <person name="Bodner M.R."/>
            <person name="Cordes M.H."/>
            <person name="Baldwin K.L."/>
            <person name="Rynerson M.R."/>
            <person name="Burns S.N."/>
            <person name="Zobel-Thropp P.A."/>
        </authorList>
    </citation>
    <scope>NUCLEOTIDE SEQUENCE [MRNA]</scope>
    <scope>NOMENCLATURE</scope>
    <source>
        <tissue>Venom gland</tissue>
    </source>
</reference>